<organism>
    <name type="scientific">Mus musculus</name>
    <name type="common">Mouse</name>
    <dbReference type="NCBI Taxonomy" id="10090"/>
    <lineage>
        <taxon>Eukaryota</taxon>
        <taxon>Metazoa</taxon>
        <taxon>Chordata</taxon>
        <taxon>Craniata</taxon>
        <taxon>Vertebrata</taxon>
        <taxon>Euteleostomi</taxon>
        <taxon>Mammalia</taxon>
        <taxon>Eutheria</taxon>
        <taxon>Euarchontoglires</taxon>
        <taxon>Glires</taxon>
        <taxon>Rodentia</taxon>
        <taxon>Myomorpha</taxon>
        <taxon>Muroidea</taxon>
        <taxon>Muridae</taxon>
        <taxon>Murinae</taxon>
        <taxon>Mus</taxon>
        <taxon>Mus</taxon>
    </lineage>
</organism>
<dbReference type="EC" id="2.3.2.26" evidence="2"/>
<dbReference type="EMBL" id="AK015264">
    <property type="protein sequence ID" value="BAB29770.2"/>
    <property type="status" value="ALT_INIT"/>
    <property type="molecule type" value="mRNA"/>
</dbReference>
<dbReference type="EMBL" id="AK154491">
    <property type="protein sequence ID" value="BAE32623.1"/>
    <property type="molecule type" value="mRNA"/>
</dbReference>
<dbReference type="EMBL" id="BC029097">
    <property type="protein sequence ID" value="AAH29097.1"/>
    <property type="molecule type" value="mRNA"/>
</dbReference>
<dbReference type="CCDS" id="CCDS39380.1"/>
<dbReference type="RefSeq" id="NP_001033716.1">
    <property type="nucleotide sequence ID" value="NM_001038627.1"/>
</dbReference>
<dbReference type="RefSeq" id="NP_083714.3">
    <property type="nucleotide sequence ID" value="NM_029438.3"/>
</dbReference>
<dbReference type="BMRB" id="Q9CUN6"/>
<dbReference type="SMR" id="Q9CUN6"/>
<dbReference type="BioGRID" id="217743">
    <property type="interactions" value="28"/>
</dbReference>
<dbReference type="CORUM" id="Q9CUN6"/>
<dbReference type="FunCoup" id="Q9CUN6">
    <property type="interactions" value="2042"/>
</dbReference>
<dbReference type="IntAct" id="Q9CUN6">
    <property type="interactions" value="3"/>
</dbReference>
<dbReference type="MINT" id="Q9CUN6"/>
<dbReference type="STRING" id="10090.ENSMUSP00000082827"/>
<dbReference type="iPTMnet" id="Q9CUN6"/>
<dbReference type="PhosphoSitePlus" id="Q9CUN6"/>
<dbReference type="PaxDb" id="10090-ENSMUSP00000082827"/>
<dbReference type="ProteomicsDB" id="257528"/>
<dbReference type="Pumba" id="Q9CUN6"/>
<dbReference type="Antibodypedia" id="30289">
    <property type="antibodies" value="406 antibodies from 37 providers"/>
</dbReference>
<dbReference type="DNASU" id="75788"/>
<dbReference type="Ensembl" id="ENSMUST00000085684.11">
    <property type="protein sequence ID" value="ENSMUSP00000082827.5"/>
    <property type="gene ID" value="ENSMUSG00000038780.15"/>
</dbReference>
<dbReference type="GeneID" id="75788"/>
<dbReference type="KEGG" id="mmu:75788"/>
<dbReference type="UCSC" id="uc009alv.1">
    <property type="organism name" value="mouse"/>
</dbReference>
<dbReference type="AGR" id="MGI:1923038"/>
<dbReference type="CTD" id="57154"/>
<dbReference type="MGI" id="MGI:1923038">
    <property type="gene designation" value="Smurf1"/>
</dbReference>
<dbReference type="VEuPathDB" id="HostDB:ENSMUSG00000038780"/>
<dbReference type="eggNOG" id="KOG0940">
    <property type="taxonomic scope" value="Eukaryota"/>
</dbReference>
<dbReference type="GeneTree" id="ENSGT00940000158690"/>
<dbReference type="HOGENOM" id="CLU_002173_1_1_1"/>
<dbReference type="InParanoid" id="Q9CUN6"/>
<dbReference type="OrthoDB" id="8068875at2759"/>
<dbReference type="PhylomeDB" id="Q9CUN6"/>
<dbReference type="TreeFam" id="TF323658"/>
<dbReference type="Reactome" id="R-MMU-201451">
    <property type="pathway name" value="Signaling by BMP"/>
</dbReference>
<dbReference type="Reactome" id="R-MMU-2173791">
    <property type="pathway name" value="TGF-beta receptor signaling in EMT (epithelial to mesenchymal transition)"/>
</dbReference>
<dbReference type="Reactome" id="R-MMU-4608870">
    <property type="pathway name" value="Asymmetric localization of PCP proteins"/>
</dbReference>
<dbReference type="Reactome" id="R-MMU-5632684">
    <property type="pathway name" value="Hedgehog 'on' state"/>
</dbReference>
<dbReference type="Reactome" id="R-MMU-8941858">
    <property type="pathway name" value="Regulation of RUNX3 expression and activity"/>
</dbReference>
<dbReference type="Reactome" id="R-MMU-983168">
    <property type="pathway name" value="Antigen processing: Ubiquitination &amp; Proteasome degradation"/>
</dbReference>
<dbReference type="UniPathway" id="UPA00143"/>
<dbReference type="BioGRID-ORCS" id="75788">
    <property type="hits" value="1 hit in 77 CRISPR screens"/>
</dbReference>
<dbReference type="CD-CODE" id="3393144B">
    <property type="entry name" value="P62 cluster"/>
</dbReference>
<dbReference type="ChiTaRS" id="Smurf1">
    <property type="organism name" value="mouse"/>
</dbReference>
<dbReference type="PRO" id="PR:Q9CUN6"/>
<dbReference type="Proteomes" id="UP000000589">
    <property type="component" value="Chromosome 5"/>
</dbReference>
<dbReference type="RNAct" id="Q9CUN6">
    <property type="molecule type" value="protein"/>
</dbReference>
<dbReference type="Bgee" id="ENSMUSG00000038780">
    <property type="expression patterns" value="Expressed in gastrula and 246 other cell types or tissues"/>
</dbReference>
<dbReference type="ExpressionAtlas" id="Q9CUN6">
    <property type="expression patterns" value="baseline and differential"/>
</dbReference>
<dbReference type="GO" id="GO:0005737">
    <property type="term" value="C:cytoplasm"/>
    <property type="evidence" value="ECO:0000250"/>
    <property type="project" value="UniProtKB"/>
</dbReference>
<dbReference type="GO" id="GO:0005829">
    <property type="term" value="C:cytosol"/>
    <property type="evidence" value="ECO:0000304"/>
    <property type="project" value="Reactome"/>
</dbReference>
<dbReference type="GO" id="GO:0005886">
    <property type="term" value="C:plasma membrane"/>
    <property type="evidence" value="ECO:0007669"/>
    <property type="project" value="UniProtKB-SubCell"/>
</dbReference>
<dbReference type="GO" id="GO:0061630">
    <property type="term" value="F:ubiquitin protein ligase activity"/>
    <property type="evidence" value="ECO:0000304"/>
    <property type="project" value="Reactome"/>
</dbReference>
<dbReference type="GO" id="GO:0004842">
    <property type="term" value="F:ubiquitin-protein transferase activity"/>
    <property type="evidence" value="ECO:0000250"/>
    <property type="project" value="UniProtKB"/>
</dbReference>
<dbReference type="GO" id="GO:0006914">
    <property type="term" value="P:autophagy"/>
    <property type="evidence" value="ECO:0000315"/>
    <property type="project" value="MGI"/>
</dbReference>
<dbReference type="GO" id="GO:0030509">
    <property type="term" value="P:BMP signaling pathway"/>
    <property type="evidence" value="ECO:0000250"/>
    <property type="project" value="UniProtKB"/>
</dbReference>
<dbReference type="GO" id="GO:0030154">
    <property type="term" value="P:cell differentiation"/>
    <property type="evidence" value="ECO:0000250"/>
    <property type="project" value="UniProtKB"/>
</dbReference>
<dbReference type="GO" id="GO:0051607">
    <property type="term" value="P:defense response to virus"/>
    <property type="evidence" value="ECO:0000315"/>
    <property type="project" value="MGI"/>
</dbReference>
<dbReference type="GO" id="GO:0030279">
    <property type="term" value="P:negative regulation of ossification"/>
    <property type="evidence" value="ECO:0000315"/>
    <property type="project" value="MGI"/>
</dbReference>
<dbReference type="GO" id="GO:0030512">
    <property type="term" value="P:negative regulation of transforming growth factor beta receptor signaling pathway"/>
    <property type="evidence" value="ECO:0000250"/>
    <property type="project" value="UniProtKB"/>
</dbReference>
<dbReference type="GO" id="GO:0070534">
    <property type="term" value="P:protein K63-linked ubiquitination"/>
    <property type="evidence" value="ECO:0000315"/>
    <property type="project" value="MGI"/>
</dbReference>
<dbReference type="GO" id="GO:0000209">
    <property type="term" value="P:protein polyubiquitination"/>
    <property type="evidence" value="ECO:0000250"/>
    <property type="project" value="UniProtKB"/>
</dbReference>
<dbReference type="GO" id="GO:0016567">
    <property type="term" value="P:protein ubiquitination"/>
    <property type="evidence" value="ECO:0000315"/>
    <property type="project" value="MGI"/>
</dbReference>
<dbReference type="GO" id="GO:0061734">
    <property type="term" value="P:type 2 mitophagy"/>
    <property type="evidence" value="ECO:0000315"/>
    <property type="project" value="ParkinsonsUK-UCL"/>
</dbReference>
<dbReference type="GO" id="GO:0006511">
    <property type="term" value="P:ubiquitin-dependent protein catabolic process"/>
    <property type="evidence" value="ECO:0000250"/>
    <property type="project" value="UniProtKB"/>
</dbReference>
<dbReference type="CDD" id="cd08382">
    <property type="entry name" value="C2_Smurf-like"/>
    <property type="match status" value="1"/>
</dbReference>
<dbReference type="CDD" id="cd00078">
    <property type="entry name" value="HECTc"/>
    <property type="match status" value="1"/>
</dbReference>
<dbReference type="CDD" id="cd00201">
    <property type="entry name" value="WW"/>
    <property type="match status" value="2"/>
</dbReference>
<dbReference type="FunFam" id="2.20.70.10:FF:000017">
    <property type="entry name" value="E3 ubiquitin-protein ligase"/>
    <property type="match status" value="1"/>
</dbReference>
<dbReference type="FunFam" id="2.20.70.10:FF:000026">
    <property type="entry name" value="E3 ubiquitin-protein ligase"/>
    <property type="match status" value="1"/>
</dbReference>
<dbReference type="FunFam" id="2.60.40.150:FF:000024">
    <property type="entry name" value="E3 ubiquitin-protein ligase"/>
    <property type="match status" value="1"/>
</dbReference>
<dbReference type="FunFam" id="3.30.2160.10:FF:000001">
    <property type="entry name" value="E3 ubiquitin-protein ligase NEDD4-like"/>
    <property type="match status" value="1"/>
</dbReference>
<dbReference type="FunFam" id="3.30.2410.10:FF:000014">
    <property type="entry name" value="E3 ubiquitin-protein ligase SMURF1"/>
    <property type="match status" value="1"/>
</dbReference>
<dbReference type="FunFam" id="3.90.1750.10:FF:000007">
    <property type="entry name" value="E3 ubiquitin-protein ligase SMURF2"/>
    <property type="match status" value="1"/>
</dbReference>
<dbReference type="Gene3D" id="2.20.70.10">
    <property type="match status" value="1"/>
</dbReference>
<dbReference type="Gene3D" id="2.60.40.150">
    <property type="entry name" value="C2 domain"/>
    <property type="match status" value="1"/>
</dbReference>
<dbReference type="Gene3D" id="3.30.2160.10">
    <property type="entry name" value="Hect, E3 ligase catalytic domain"/>
    <property type="match status" value="1"/>
</dbReference>
<dbReference type="Gene3D" id="3.30.2410.10">
    <property type="entry name" value="Hect, E3 ligase catalytic domain"/>
    <property type="match status" value="1"/>
</dbReference>
<dbReference type="Gene3D" id="3.90.1750.10">
    <property type="entry name" value="Hect, E3 ligase catalytic domains"/>
    <property type="match status" value="1"/>
</dbReference>
<dbReference type="InterPro" id="IPR000008">
    <property type="entry name" value="C2_dom"/>
</dbReference>
<dbReference type="InterPro" id="IPR035892">
    <property type="entry name" value="C2_domain_sf"/>
</dbReference>
<dbReference type="InterPro" id="IPR024928">
    <property type="entry name" value="E3_ub_ligase_SMURF1"/>
</dbReference>
<dbReference type="InterPro" id="IPR050409">
    <property type="entry name" value="E3_ubiq-protein_ligase"/>
</dbReference>
<dbReference type="InterPro" id="IPR000569">
    <property type="entry name" value="HECT_dom"/>
</dbReference>
<dbReference type="InterPro" id="IPR035983">
    <property type="entry name" value="Hect_E3_ubiquitin_ligase"/>
</dbReference>
<dbReference type="InterPro" id="IPR001202">
    <property type="entry name" value="WW_dom"/>
</dbReference>
<dbReference type="InterPro" id="IPR036020">
    <property type="entry name" value="WW_dom_sf"/>
</dbReference>
<dbReference type="PANTHER" id="PTHR11254:SF293">
    <property type="entry name" value="E3 UBIQUITIN-PROTEIN LIGASE SMURF1"/>
    <property type="match status" value="1"/>
</dbReference>
<dbReference type="PANTHER" id="PTHR11254">
    <property type="entry name" value="HECT DOMAIN UBIQUITIN-PROTEIN LIGASE"/>
    <property type="match status" value="1"/>
</dbReference>
<dbReference type="Pfam" id="PF00168">
    <property type="entry name" value="C2"/>
    <property type="match status" value="1"/>
</dbReference>
<dbReference type="Pfam" id="PF00632">
    <property type="entry name" value="HECT"/>
    <property type="match status" value="1"/>
</dbReference>
<dbReference type="Pfam" id="PF00397">
    <property type="entry name" value="WW"/>
    <property type="match status" value="2"/>
</dbReference>
<dbReference type="PIRSF" id="PIRSF001569">
    <property type="entry name" value="E3_ub_ligase_SMURF1"/>
    <property type="match status" value="1"/>
</dbReference>
<dbReference type="SMART" id="SM00239">
    <property type="entry name" value="C2"/>
    <property type="match status" value="1"/>
</dbReference>
<dbReference type="SMART" id="SM00119">
    <property type="entry name" value="HECTc"/>
    <property type="match status" value="1"/>
</dbReference>
<dbReference type="SMART" id="SM00456">
    <property type="entry name" value="WW"/>
    <property type="match status" value="2"/>
</dbReference>
<dbReference type="SUPFAM" id="SSF49562">
    <property type="entry name" value="C2 domain (Calcium/lipid-binding domain, CaLB)"/>
    <property type="match status" value="1"/>
</dbReference>
<dbReference type="SUPFAM" id="SSF56204">
    <property type="entry name" value="Hect, E3 ligase catalytic domain"/>
    <property type="match status" value="1"/>
</dbReference>
<dbReference type="SUPFAM" id="SSF51045">
    <property type="entry name" value="WW domain"/>
    <property type="match status" value="2"/>
</dbReference>
<dbReference type="PROSITE" id="PS50004">
    <property type="entry name" value="C2"/>
    <property type="match status" value="1"/>
</dbReference>
<dbReference type="PROSITE" id="PS50237">
    <property type="entry name" value="HECT"/>
    <property type="match status" value="1"/>
</dbReference>
<dbReference type="PROSITE" id="PS01159">
    <property type="entry name" value="WW_DOMAIN_1"/>
    <property type="match status" value="1"/>
</dbReference>
<dbReference type="PROSITE" id="PS50020">
    <property type="entry name" value="WW_DOMAIN_2"/>
    <property type="match status" value="2"/>
</dbReference>
<comment type="function">
    <text evidence="2 7">E3 ubiquitin-protein ligase that acts as a negative regulator of BMP signaling pathway (By similarity). Mediates ubiquitination and degradation of SMAD1 and SMAD5, 2 receptor-regulated SMADs specific for the BMP pathway (By similarity). Promotes ubiquitination and subsequent proteasomal degradation of TRAF family members and RHOA (By similarity). Promotes ubiquitination and subsequent proteasomal degradation of MAVS (PubMed:23087404). Acts as an antagonist of TGF-beta signaling by ubiquitinating TGFBR1 and targeting it for degradation (By similarity). Plays a role in dendrite formation by melanocytes (By similarity).</text>
</comment>
<comment type="catalytic activity">
    <reaction evidence="2">
        <text>S-ubiquitinyl-[E2 ubiquitin-conjugating enzyme]-L-cysteine + [acceptor protein]-L-lysine = [E2 ubiquitin-conjugating enzyme]-L-cysteine + N(6)-ubiquitinyl-[acceptor protein]-L-lysine.</text>
        <dbReference type="EC" id="2.3.2.26"/>
    </reaction>
</comment>
<comment type="pathway">
    <text>Protein modification; protein ubiquitination.</text>
</comment>
<comment type="subunit">
    <text evidence="2 7">Interacts with TRAF4 (By similarity). Interacts (via HECT domain) with FBXL15 (via LRR repeats) (By similarity). Interacts with SMAD7 and TGFBR1; SMAD7 recruits SMURF1 to TGFBR1 and regulates TGF-beta receptor degradation (By similarity). Interacts with MAVS; the interaction is mediated by NDFIP1 (PubMed:23087404).</text>
</comment>
<comment type="subcellular location">
    <subcellularLocation>
        <location evidence="1">Cytoplasm</location>
    </subcellularLocation>
    <subcellularLocation>
        <location evidence="1">Cell membrane</location>
        <topology evidence="1">Peripheral membrane protein</topology>
        <orientation evidence="1">Cytoplasmic side</orientation>
    </subcellularLocation>
</comment>
<comment type="domain">
    <text evidence="1">The C2 domain mediates membrane localization and substrate selection.</text>
</comment>
<comment type="PTM">
    <text evidence="2">Auto-ubiquitinated in presence of NDFIP1. Ubiquitinated by the SCF(FBXL15) complex at Lys-355 and Lys-357, leading to its degradation by the proteasome. Lys-357 is the primary ubiquitination site.</text>
</comment>
<comment type="sequence caution" evidence="8">
    <conflict type="erroneous initiation">
        <sequence resource="EMBL-CDS" id="BAB29770"/>
    </conflict>
</comment>
<feature type="chain" id="PRO_0000120327" description="E3 ubiquitin-protein ligase SMURF1">
    <location>
        <begin position="1"/>
        <end position="731"/>
    </location>
</feature>
<feature type="domain" description="C2" evidence="3">
    <location>
        <begin position="1"/>
        <end position="120"/>
    </location>
</feature>
<feature type="domain" description="WW 1" evidence="5">
    <location>
        <begin position="234"/>
        <end position="267"/>
    </location>
</feature>
<feature type="domain" description="WW 2" evidence="5">
    <location>
        <begin position="280"/>
        <end position="313"/>
    </location>
</feature>
<feature type="domain" description="HECT" evidence="4">
    <location>
        <begin position="394"/>
        <end position="731"/>
    </location>
</feature>
<feature type="region of interest" description="Disordered" evidence="6">
    <location>
        <begin position="216"/>
        <end position="237"/>
    </location>
</feature>
<feature type="active site" description="Glycyl thioester intermediate" evidence="4">
    <location>
        <position position="699"/>
    </location>
</feature>
<feature type="modified residue" description="Phosphoserine" evidence="2">
    <location>
        <position position="200"/>
    </location>
</feature>
<feature type="cross-link" description="Glycyl lysine isopeptide (Lys-Gly) (interchain with G-Cter in ubiquitin)" evidence="2">
    <location>
        <position position="355"/>
    </location>
</feature>
<feature type="cross-link" description="Glycyl lysine isopeptide (Lys-Gly) (interchain with G-Cter in ubiquitin)" evidence="2">
    <location>
        <position position="357"/>
    </location>
</feature>
<feature type="sequence conflict" description="In Ref. 2; AAH29097." evidence="8" ref="2">
    <original>N</original>
    <variation>S</variation>
    <location>
        <position position="63"/>
    </location>
</feature>
<feature type="sequence conflict" description="In Ref. 1; BAB29770." evidence="8" ref="1">
    <original>D</original>
    <variation>N</variation>
    <location>
        <position position="204"/>
    </location>
</feature>
<feature type="sequence conflict" description="In Ref. 1; BAB29770." evidence="8" ref="1">
    <original>R</original>
    <variation>Q</variation>
    <location>
        <position position="213"/>
    </location>
</feature>
<feature type="sequence conflict" description="In Ref. 1; BAB29770." evidence="8" ref="1">
    <original>R</original>
    <variation>Q</variation>
    <location>
        <position position="218"/>
    </location>
</feature>
<feature type="sequence conflict" description="In Ref. 1; BAE32623." evidence="8" ref="1">
    <original>E</original>
    <variation>G</variation>
    <location>
        <position position="278"/>
    </location>
</feature>
<feature type="sequence conflict" description="In Ref. 1; BAB29770." evidence="8" ref="1">
    <original>S</original>
    <variation>N</variation>
    <location>
        <position position="334"/>
    </location>
</feature>
<feature type="sequence conflict" description="In Ref. 1; BAB29770." evidence="8" ref="1">
    <original>T</original>
    <variation>K</variation>
    <location>
        <position position="446"/>
    </location>
</feature>
<feature type="sequence conflict" description="In Ref. 1; BAB29770 and 2; AAH29097." evidence="8" ref="1 2">
    <location>
        <begin position="671"/>
        <end position="673"/>
    </location>
</feature>
<accession>Q9CUN6</accession>
<accession>Q3U412</accession>
<accession>Q8K300</accession>
<evidence type="ECO:0000250" key="1"/>
<evidence type="ECO:0000250" key="2">
    <source>
        <dbReference type="UniProtKB" id="Q9HCE7"/>
    </source>
</evidence>
<evidence type="ECO:0000255" key="3">
    <source>
        <dbReference type="PROSITE-ProRule" id="PRU00041"/>
    </source>
</evidence>
<evidence type="ECO:0000255" key="4">
    <source>
        <dbReference type="PROSITE-ProRule" id="PRU00104"/>
    </source>
</evidence>
<evidence type="ECO:0000255" key="5">
    <source>
        <dbReference type="PROSITE-ProRule" id="PRU00224"/>
    </source>
</evidence>
<evidence type="ECO:0000256" key="6">
    <source>
        <dbReference type="SAM" id="MobiDB-lite"/>
    </source>
</evidence>
<evidence type="ECO:0000269" key="7">
    <source>
    </source>
</evidence>
<evidence type="ECO:0000305" key="8"/>
<name>SMUF1_MOUSE</name>
<reference key="1">
    <citation type="journal article" date="2005" name="Science">
        <title>The transcriptional landscape of the mammalian genome.</title>
        <authorList>
            <person name="Carninci P."/>
            <person name="Kasukawa T."/>
            <person name="Katayama S."/>
            <person name="Gough J."/>
            <person name="Frith M.C."/>
            <person name="Maeda N."/>
            <person name="Oyama R."/>
            <person name="Ravasi T."/>
            <person name="Lenhard B."/>
            <person name="Wells C."/>
            <person name="Kodzius R."/>
            <person name="Shimokawa K."/>
            <person name="Bajic V.B."/>
            <person name="Brenner S.E."/>
            <person name="Batalov S."/>
            <person name="Forrest A.R."/>
            <person name="Zavolan M."/>
            <person name="Davis M.J."/>
            <person name="Wilming L.G."/>
            <person name="Aidinis V."/>
            <person name="Allen J.E."/>
            <person name="Ambesi-Impiombato A."/>
            <person name="Apweiler R."/>
            <person name="Aturaliya R.N."/>
            <person name="Bailey T.L."/>
            <person name="Bansal M."/>
            <person name="Baxter L."/>
            <person name="Beisel K.W."/>
            <person name="Bersano T."/>
            <person name="Bono H."/>
            <person name="Chalk A.M."/>
            <person name="Chiu K.P."/>
            <person name="Choudhary V."/>
            <person name="Christoffels A."/>
            <person name="Clutterbuck D.R."/>
            <person name="Crowe M.L."/>
            <person name="Dalla E."/>
            <person name="Dalrymple B.P."/>
            <person name="de Bono B."/>
            <person name="Della Gatta G."/>
            <person name="di Bernardo D."/>
            <person name="Down T."/>
            <person name="Engstrom P."/>
            <person name="Fagiolini M."/>
            <person name="Faulkner G."/>
            <person name="Fletcher C.F."/>
            <person name="Fukushima T."/>
            <person name="Furuno M."/>
            <person name="Futaki S."/>
            <person name="Gariboldi M."/>
            <person name="Georgii-Hemming P."/>
            <person name="Gingeras T.R."/>
            <person name="Gojobori T."/>
            <person name="Green R.E."/>
            <person name="Gustincich S."/>
            <person name="Harbers M."/>
            <person name="Hayashi Y."/>
            <person name="Hensch T.K."/>
            <person name="Hirokawa N."/>
            <person name="Hill D."/>
            <person name="Huminiecki L."/>
            <person name="Iacono M."/>
            <person name="Ikeo K."/>
            <person name="Iwama A."/>
            <person name="Ishikawa T."/>
            <person name="Jakt M."/>
            <person name="Kanapin A."/>
            <person name="Katoh M."/>
            <person name="Kawasawa Y."/>
            <person name="Kelso J."/>
            <person name="Kitamura H."/>
            <person name="Kitano H."/>
            <person name="Kollias G."/>
            <person name="Krishnan S.P."/>
            <person name="Kruger A."/>
            <person name="Kummerfeld S.K."/>
            <person name="Kurochkin I.V."/>
            <person name="Lareau L.F."/>
            <person name="Lazarevic D."/>
            <person name="Lipovich L."/>
            <person name="Liu J."/>
            <person name="Liuni S."/>
            <person name="McWilliam S."/>
            <person name="Madan Babu M."/>
            <person name="Madera M."/>
            <person name="Marchionni L."/>
            <person name="Matsuda H."/>
            <person name="Matsuzawa S."/>
            <person name="Miki H."/>
            <person name="Mignone F."/>
            <person name="Miyake S."/>
            <person name="Morris K."/>
            <person name="Mottagui-Tabar S."/>
            <person name="Mulder N."/>
            <person name="Nakano N."/>
            <person name="Nakauchi H."/>
            <person name="Ng P."/>
            <person name="Nilsson R."/>
            <person name="Nishiguchi S."/>
            <person name="Nishikawa S."/>
            <person name="Nori F."/>
            <person name="Ohara O."/>
            <person name="Okazaki Y."/>
            <person name="Orlando V."/>
            <person name="Pang K.C."/>
            <person name="Pavan W.J."/>
            <person name="Pavesi G."/>
            <person name="Pesole G."/>
            <person name="Petrovsky N."/>
            <person name="Piazza S."/>
            <person name="Reed J."/>
            <person name="Reid J.F."/>
            <person name="Ring B.Z."/>
            <person name="Ringwald M."/>
            <person name="Rost B."/>
            <person name="Ruan Y."/>
            <person name="Salzberg S.L."/>
            <person name="Sandelin A."/>
            <person name="Schneider C."/>
            <person name="Schoenbach C."/>
            <person name="Sekiguchi K."/>
            <person name="Semple C.A."/>
            <person name="Seno S."/>
            <person name="Sessa L."/>
            <person name="Sheng Y."/>
            <person name="Shibata Y."/>
            <person name="Shimada H."/>
            <person name="Shimada K."/>
            <person name="Silva D."/>
            <person name="Sinclair B."/>
            <person name="Sperling S."/>
            <person name="Stupka E."/>
            <person name="Sugiura K."/>
            <person name="Sultana R."/>
            <person name="Takenaka Y."/>
            <person name="Taki K."/>
            <person name="Tammoja K."/>
            <person name="Tan S.L."/>
            <person name="Tang S."/>
            <person name="Taylor M.S."/>
            <person name="Tegner J."/>
            <person name="Teichmann S.A."/>
            <person name="Ueda H.R."/>
            <person name="van Nimwegen E."/>
            <person name="Verardo R."/>
            <person name="Wei C.L."/>
            <person name="Yagi K."/>
            <person name="Yamanishi H."/>
            <person name="Zabarovsky E."/>
            <person name="Zhu S."/>
            <person name="Zimmer A."/>
            <person name="Hide W."/>
            <person name="Bult C."/>
            <person name="Grimmond S.M."/>
            <person name="Teasdale R.D."/>
            <person name="Liu E.T."/>
            <person name="Brusic V."/>
            <person name="Quackenbush J."/>
            <person name="Wahlestedt C."/>
            <person name="Mattick J.S."/>
            <person name="Hume D.A."/>
            <person name="Kai C."/>
            <person name="Sasaki D."/>
            <person name="Tomaru Y."/>
            <person name="Fukuda S."/>
            <person name="Kanamori-Katayama M."/>
            <person name="Suzuki M."/>
            <person name="Aoki J."/>
            <person name="Arakawa T."/>
            <person name="Iida J."/>
            <person name="Imamura K."/>
            <person name="Itoh M."/>
            <person name="Kato T."/>
            <person name="Kawaji H."/>
            <person name="Kawagashira N."/>
            <person name="Kawashima T."/>
            <person name="Kojima M."/>
            <person name="Kondo S."/>
            <person name="Konno H."/>
            <person name="Nakano K."/>
            <person name="Ninomiya N."/>
            <person name="Nishio T."/>
            <person name="Okada M."/>
            <person name="Plessy C."/>
            <person name="Shibata K."/>
            <person name="Shiraki T."/>
            <person name="Suzuki S."/>
            <person name="Tagami M."/>
            <person name="Waki K."/>
            <person name="Watahiki A."/>
            <person name="Okamura-Oho Y."/>
            <person name="Suzuki H."/>
            <person name="Kawai J."/>
            <person name="Hayashizaki Y."/>
        </authorList>
    </citation>
    <scope>NUCLEOTIDE SEQUENCE [LARGE SCALE MRNA]</scope>
    <source>
        <strain>C57BL/6J</strain>
        <strain>NOD</strain>
        <tissue>Testis</tissue>
    </source>
</reference>
<reference key="2">
    <citation type="journal article" date="2004" name="Genome Res.">
        <title>The status, quality, and expansion of the NIH full-length cDNA project: the Mammalian Gene Collection (MGC).</title>
        <authorList>
            <consortium name="The MGC Project Team"/>
        </authorList>
    </citation>
    <scope>NUCLEOTIDE SEQUENCE [LARGE SCALE MRNA]</scope>
    <source>
        <strain>Czech II</strain>
        <tissue>Mammary tumor</tissue>
    </source>
</reference>
<reference key="3">
    <citation type="journal article" date="2012" name="J. Immunol.">
        <title>Ndfip1 negatively regulates RIG-I-dependent immune signaling by enhancing E3 ligase Smurf1-mediated MAVS degradation.</title>
        <authorList>
            <person name="Wang Y."/>
            <person name="Tong X."/>
            <person name="Ye X."/>
        </authorList>
    </citation>
    <scope>FUNCTION</scope>
    <scope>INTERACTION WITH MAVS</scope>
</reference>
<keyword id="KW-1003">Cell membrane</keyword>
<keyword id="KW-0963">Cytoplasm</keyword>
<keyword id="KW-0221">Differentiation</keyword>
<keyword id="KW-1017">Isopeptide bond</keyword>
<keyword id="KW-0472">Membrane</keyword>
<keyword id="KW-0597">Phosphoprotein</keyword>
<keyword id="KW-1185">Reference proteome</keyword>
<keyword id="KW-0677">Repeat</keyword>
<keyword id="KW-0808">Transferase</keyword>
<keyword id="KW-0832">Ubl conjugation</keyword>
<keyword id="KW-0833">Ubl conjugation pathway</keyword>
<protein>
    <recommendedName>
        <fullName>E3 ubiquitin-protein ligase SMURF1</fullName>
        <ecNumber evidence="2">2.3.2.26</ecNumber>
    </recommendedName>
    <alternativeName>
        <fullName>HECT-type E3 ubiquitin transferase SMURF1</fullName>
    </alternativeName>
    <alternativeName>
        <fullName>SMAD ubiquitination regulatory factor 1</fullName>
    </alternativeName>
    <alternativeName>
        <fullName>SMAD-specific E3 ubiquitin-protein ligase 1</fullName>
    </alternativeName>
</protein>
<sequence length="731" mass="83356">MSNPGTRRNGSSIKIRLTVLCAKNLAKKDFFRLPDPFAKIVVDGSGQCHSTDTVKNTLDPKWNQHYDLYVGKTDSITISVWNHKKIHKKQGAGFLGCVRLLSNAISRLKDTGYQRLDLCKLNPSDTDAVRGQIVVSLQTRDRIGGGGSVVDCRGLLENEGTVYEDSGPGRPLSCLMEEPAPYTDGTGAAAGGGNCRFVESPSQDQRLLVQRLRNPEVRGPLQTPQNRPHGHQSPELPEGYEQRTTVQGQVYFLHTQTGVSTWHDPRIPRDLNSVNCDELGPLPPGWEVRSTVSGRIYFVDHNNRTTQFTDPRLHHIMNHQCQLKEPSQPLQLPSEGSVEDEELPAQRYERDLVQKLKVLRHELSLQQPQAGHCRIEVSREEIFEESYRQIMKMRPKDLKKRLMVKFRGEEGLDYGGVAREWLYLLCHEMLNPYYGLFQYSTDNIYTLQINPDSSINPDHLSYFHFVGRIMGLAVFHGHYINGGFTVPFYKQLLGKPIQLSDLESVDPELHKSLVWILENDITPVLDHTFCVEHNAFGRILQHELKPNGRNVPVTEENKKEYVRLYVNWRFMRGIEAQFLALQKGFNELIPQHLLKPFDQKELELIIGGLDKIDLNDWKSNTRLKHCVADSNIVRWFWQAVETFDEERRARLLQFVTGSTRVPLQGFKALQGSTGAAGPRLFTIHLIDANTDNLPKAHTCFNRIDIPPYESYEKLYEKLLTAVEETCGFAVE</sequence>
<proteinExistence type="evidence at protein level"/>
<gene>
    <name type="primary">Smurf1</name>
</gene>